<keyword id="KW-0002">3D-structure</keyword>
<keyword id="KW-0877">Alternative promoter usage</keyword>
<keyword id="KW-1003">Cell membrane</keyword>
<keyword id="KW-0168">Coated pit</keyword>
<keyword id="KW-0217">Developmental protein</keyword>
<keyword id="KW-0903">Direct protein sequencing</keyword>
<keyword id="KW-0225">Disease variant</keyword>
<keyword id="KW-1015">Disulfide bond</keyword>
<keyword id="KW-0967">Endosome</keyword>
<keyword id="KW-0325">Glycoprotein</keyword>
<keyword id="KW-0472">Membrane</keyword>
<keyword id="KW-0653">Protein transport</keyword>
<keyword id="KW-1267">Proteomics identification</keyword>
<keyword id="KW-1185">Reference proteome</keyword>
<keyword id="KW-0964">Secreted</keyword>
<keyword id="KW-0732">Signal</keyword>
<keyword id="KW-0812">Transmembrane</keyword>
<keyword id="KW-1133">Transmembrane helix</keyword>
<keyword id="KW-0813">Transport</keyword>
<dbReference type="EMBL" id="AF328788">
    <property type="protein sequence ID" value="AAK28532.1"/>
    <property type="molecule type" value="mRNA"/>
</dbReference>
<dbReference type="EMBL" id="AL117209">
    <property type="status" value="NOT_ANNOTATED_CDS"/>
    <property type="molecule type" value="Genomic_DNA"/>
</dbReference>
<dbReference type="EMBL" id="AY358468">
    <property type="protein sequence ID" value="AAQ89949.1"/>
    <property type="molecule type" value="mRNA"/>
</dbReference>
<dbReference type="CCDS" id="CCDS9977.1">
    <molecule id="Q9BXJ7-1"/>
</dbReference>
<dbReference type="RefSeq" id="NP_112205.2">
    <molecule id="Q9BXJ7-1"/>
    <property type="nucleotide sequence ID" value="NM_030943.4"/>
</dbReference>
<dbReference type="PDB" id="6GJE">
    <property type="method" value="X-ray"/>
    <property type="resolution" value="2.30 A"/>
    <property type="chains" value="A=20-359"/>
</dbReference>
<dbReference type="PDBsum" id="6GJE"/>
<dbReference type="SMR" id="Q9BXJ7"/>
<dbReference type="BioGRID" id="123571">
    <property type="interactions" value="1"/>
</dbReference>
<dbReference type="ComplexPortal" id="CPX-5774">
    <property type="entry name" value="Cubam cobalamin uptake receptor complex"/>
</dbReference>
<dbReference type="CORUM" id="Q9BXJ7"/>
<dbReference type="FunCoup" id="Q9BXJ7">
    <property type="interactions" value="24"/>
</dbReference>
<dbReference type="IntAct" id="Q9BXJ7">
    <property type="interactions" value="2"/>
</dbReference>
<dbReference type="STRING" id="9606.ENSP00000299155"/>
<dbReference type="DrugBank" id="DB00115">
    <property type="generic name" value="Cyanocobalamin"/>
</dbReference>
<dbReference type="DrugBank" id="DB00200">
    <property type="generic name" value="Hydroxocobalamin"/>
</dbReference>
<dbReference type="DrugCentral" id="Q9BXJ7"/>
<dbReference type="GlyCosmos" id="Q9BXJ7">
    <property type="glycosylation" value="1 site, No reported glycans"/>
</dbReference>
<dbReference type="GlyGen" id="Q9BXJ7">
    <property type="glycosylation" value="1 site"/>
</dbReference>
<dbReference type="iPTMnet" id="Q9BXJ7"/>
<dbReference type="PhosphoSitePlus" id="Q9BXJ7"/>
<dbReference type="BioMuta" id="AMN"/>
<dbReference type="DMDM" id="296434395"/>
<dbReference type="jPOST" id="Q9BXJ7"/>
<dbReference type="MassIVE" id="Q9BXJ7"/>
<dbReference type="PaxDb" id="9606-ENSP00000299155"/>
<dbReference type="PeptideAtlas" id="Q9BXJ7"/>
<dbReference type="ProteomicsDB" id="79440">
    <molecule id="Q9BXJ7-1"/>
</dbReference>
<dbReference type="Antibodypedia" id="13">
    <property type="antibodies" value="51 antibodies from 21 providers"/>
</dbReference>
<dbReference type="DNASU" id="81693"/>
<dbReference type="Ensembl" id="ENST00000299155.10">
    <molecule id="Q9BXJ7-1"/>
    <property type="protein sequence ID" value="ENSP00000299155.6"/>
    <property type="gene ID" value="ENSG00000166126.11"/>
</dbReference>
<dbReference type="GeneID" id="81693"/>
<dbReference type="KEGG" id="hsa:81693"/>
<dbReference type="MANE-Select" id="ENST00000299155.10">
    <property type="protein sequence ID" value="ENSP00000299155.6"/>
    <property type="RefSeq nucleotide sequence ID" value="NM_030943.4"/>
    <property type="RefSeq protein sequence ID" value="NP_112205.2"/>
</dbReference>
<dbReference type="UCSC" id="uc001ymg.5">
    <molecule id="Q9BXJ7-1"/>
    <property type="organism name" value="human"/>
</dbReference>
<dbReference type="AGR" id="HGNC:14604"/>
<dbReference type="CTD" id="81693"/>
<dbReference type="DisGeNET" id="81693"/>
<dbReference type="GeneCards" id="AMN"/>
<dbReference type="HGNC" id="HGNC:14604">
    <property type="gene designation" value="AMN"/>
</dbReference>
<dbReference type="HPA" id="ENSG00000166126">
    <property type="expression patterns" value="Group enriched (intestine, kidney, liver)"/>
</dbReference>
<dbReference type="MalaCards" id="AMN"/>
<dbReference type="MIM" id="605799">
    <property type="type" value="gene"/>
</dbReference>
<dbReference type="MIM" id="618882">
    <property type="type" value="phenotype"/>
</dbReference>
<dbReference type="neXtProt" id="NX_Q9BXJ7"/>
<dbReference type="OpenTargets" id="ENSG00000166126"/>
<dbReference type="Orphanet" id="35858">
    <property type="disease" value="Imerslund-Graesbeck syndrome"/>
</dbReference>
<dbReference type="PharmGKB" id="PA134962814"/>
<dbReference type="VEuPathDB" id="HostDB:ENSG00000166126"/>
<dbReference type="eggNOG" id="ENOG502QUUQ">
    <property type="taxonomic scope" value="Eukaryota"/>
</dbReference>
<dbReference type="GeneTree" id="ENSGT00390000007463"/>
<dbReference type="HOGENOM" id="CLU_050471_0_0_1"/>
<dbReference type="InParanoid" id="Q9BXJ7"/>
<dbReference type="OMA" id="PDRFSWL"/>
<dbReference type="OrthoDB" id="10067964at2759"/>
<dbReference type="PAN-GO" id="Q9BXJ7">
    <property type="GO annotations" value="4 GO annotations based on evolutionary models"/>
</dbReference>
<dbReference type="PhylomeDB" id="Q9BXJ7"/>
<dbReference type="TreeFam" id="TF323790"/>
<dbReference type="PathwayCommons" id="Q9BXJ7"/>
<dbReference type="Reactome" id="R-HSA-3359462">
    <property type="pathway name" value="Defective AMN causes MGA1"/>
</dbReference>
<dbReference type="Reactome" id="R-HSA-3359463">
    <property type="pathway name" value="Defective CUBN causes MGA1"/>
</dbReference>
<dbReference type="Reactome" id="R-HSA-8964011">
    <property type="pathway name" value="HDL clearance"/>
</dbReference>
<dbReference type="Reactome" id="R-HSA-9758881">
    <property type="pathway name" value="Uptake of dietary cobalamins into enterocytes"/>
</dbReference>
<dbReference type="SignaLink" id="Q9BXJ7"/>
<dbReference type="BioGRID-ORCS" id="81693">
    <property type="hits" value="15 hits in 1146 CRISPR screens"/>
</dbReference>
<dbReference type="GeneWiki" id="Amnionless"/>
<dbReference type="GenomeRNAi" id="81693"/>
<dbReference type="Pharos" id="Q9BXJ7">
    <property type="development level" value="Tbio"/>
</dbReference>
<dbReference type="PRO" id="PR:Q9BXJ7"/>
<dbReference type="Proteomes" id="UP000005640">
    <property type="component" value="Chromosome 14"/>
</dbReference>
<dbReference type="RNAct" id="Q9BXJ7">
    <property type="molecule type" value="protein"/>
</dbReference>
<dbReference type="Bgee" id="ENSG00000166126">
    <property type="expression patterns" value="Expressed in mucosa of transverse colon and 169 other cell types or tissues"/>
</dbReference>
<dbReference type="ExpressionAtlas" id="Q9BXJ7">
    <property type="expression patterns" value="baseline and differential"/>
</dbReference>
<dbReference type="GO" id="GO:0016324">
    <property type="term" value="C:apical plasma membrane"/>
    <property type="evidence" value="ECO:0000314"/>
    <property type="project" value="UniProtKB"/>
</dbReference>
<dbReference type="GO" id="GO:0031526">
    <property type="term" value="C:brush border membrane"/>
    <property type="evidence" value="ECO:0007669"/>
    <property type="project" value="Ensembl"/>
</dbReference>
<dbReference type="GO" id="GO:0005905">
    <property type="term" value="C:clathrin-coated pit"/>
    <property type="evidence" value="ECO:0007669"/>
    <property type="project" value="UniProtKB-KW"/>
</dbReference>
<dbReference type="GO" id="GO:0030139">
    <property type="term" value="C:endocytic vesicle"/>
    <property type="evidence" value="ECO:0000314"/>
    <property type="project" value="UniProtKB"/>
</dbReference>
<dbReference type="GO" id="GO:0010008">
    <property type="term" value="C:endosome membrane"/>
    <property type="evidence" value="ECO:0007669"/>
    <property type="project" value="UniProtKB-SubCell"/>
</dbReference>
<dbReference type="GO" id="GO:0070062">
    <property type="term" value="C:extracellular exosome"/>
    <property type="evidence" value="ECO:0007005"/>
    <property type="project" value="UniProtKB"/>
</dbReference>
<dbReference type="GO" id="GO:0005615">
    <property type="term" value="C:extracellular space"/>
    <property type="evidence" value="ECO:0000314"/>
    <property type="project" value="UniProtKB"/>
</dbReference>
<dbReference type="GO" id="GO:0016020">
    <property type="term" value="C:membrane"/>
    <property type="evidence" value="ECO:0000314"/>
    <property type="project" value="ComplexPortal"/>
</dbReference>
<dbReference type="GO" id="GO:0031528">
    <property type="term" value="C:microvillus membrane"/>
    <property type="evidence" value="ECO:0000314"/>
    <property type="project" value="MGI"/>
</dbReference>
<dbReference type="GO" id="GO:0005886">
    <property type="term" value="C:plasma membrane"/>
    <property type="evidence" value="ECO:0000304"/>
    <property type="project" value="Reactome"/>
</dbReference>
<dbReference type="GO" id="GO:0043235">
    <property type="term" value="C:receptor complex"/>
    <property type="evidence" value="ECO:0000353"/>
    <property type="project" value="ComplexPortal"/>
</dbReference>
<dbReference type="GO" id="GO:0038024">
    <property type="term" value="F:cargo receptor activity"/>
    <property type="evidence" value="ECO:0000314"/>
    <property type="project" value="MGI"/>
</dbReference>
<dbReference type="GO" id="GO:0005102">
    <property type="term" value="F:signaling receptor binding"/>
    <property type="evidence" value="ECO:0000353"/>
    <property type="project" value="UniProtKB"/>
</dbReference>
<dbReference type="GO" id="GO:0009235">
    <property type="term" value="P:cobalamin metabolic process"/>
    <property type="evidence" value="ECO:0000314"/>
    <property type="project" value="MGI"/>
</dbReference>
<dbReference type="GO" id="GO:0015889">
    <property type="term" value="P:cobalamin transport"/>
    <property type="evidence" value="ECO:0000314"/>
    <property type="project" value="UniProtKB"/>
</dbReference>
<dbReference type="GO" id="GO:0043001">
    <property type="term" value="P:Golgi to plasma membrane protein transport"/>
    <property type="evidence" value="ECO:0000314"/>
    <property type="project" value="UniProtKB"/>
</dbReference>
<dbReference type="GO" id="GO:0008104">
    <property type="term" value="P:protein localization"/>
    <property type="evidence" value="ECO:0000318"/>
    <property type="project" value="GO_Central"/>
</dbReference>
<dbReference type="GO" id="GO:0006898">
    <property type="term" value="P:receptor-mediated endocytosis"/>
    <property type="evidence" value="ECO:0000314"/>
    <property type="project" value="UniProtKB"/>
</dbReference>
<dbReference type="GO" id="GO:0097017">
    <property type="term" value="P:renal protein absorption"/>
    <property type="evidence" value="ECO:0007669"/>
    <property type="project" value="Ensembl"/>
</dbReference>
<dbReference type="InterPro" id="IPR026112">
    <property type="entry name" value="AMN"/>
</dbReference>
<dbReference type="PANTHER" id="PTHR14995">
    <property type="entry name" value="AMNIONLESS"/>
    <property type="match status" value="1"/>
</dbReference>
<dbReference type="PANTHER" id="PTHR14995:SF2">
    <property type="entry name" value="PROTEIN AMNIONLESS"/>
    <property type="match status" value="1"/>
</dbReference>
<dbReference type="Pfam" id="PF14828">
    <property type="entry name" value="Amnionless"/>
    <property type="match status" value="1"/>
</dbReference>
<protein>
    <recommendedName>
        <fullName>Protein amnionless</fullName>
    </recommendedName>
    <component>
        <recommendedName>
            <fullName>Soluble protein amnionless</fullName>
        </recommendedName>
    </component>
</protein>
<organism>
    <name type="scientific">Homo sapiens</name>
    <name type="common">Human</name>
    <dbReference type="NCBI Taxonomy" id="9606"/>
    <lineage>
        <taxon>Eukaryota</taxon>
        <taxon>Metazoa</taxon>
        <taxon>Chordata</taxon>
        <taxon>Craniata</taxon>
        <taxon>Vertebrata</taxon>
        <taxon>Euteleostomi</taxon>
        <taxon>Mammalia</taxon>
        <taxon>Eutheria</taxon>
        <taxon>Euarchontoglires</taxon>
        <taxon>Primates</taxon>
        <taxon>Haplorrhini</taxon>
        <taxon>Catarrhini</taxon>
        <taxon>Hominidae</taxon>
        <taxon>Homo</taxon>
    </lineage>
</organism>
<comment type="function">
    <text evidence="3 4 7 8 9 13 14">Membrane-bound component of the endocytic receptor formed by AMN and CUBN (PubMed:14576052, PubMed:29402915, PubMed:30523278). Required for normal CUBN glycosylation and trafficking to the cell surface (PubMed:14576052, PubMed:29402915). The complex formed by AMN and CUBN is required for efficient absorption of vitamin B12 (PubMed:12590260, PubMed:14576052, PubMed:26040326). Required for normal CUBN-mediated protein transport in the kidney (Probable).</text>
</comment>
<comment type="subunit">
    <text evidence="4 8 9">Interacts (via extracellular region) with CUBN/cubilin, giving rise to a huge complex containing one AMN chain and three CUBN chains.</text>
</comment>
<comment type="interaction">
    <interactant intactId="EBI-11510881">
        <id>Q9BXJ7</id>
    </interactant>
    <interactant intactId="EBI-3953632">
        <id>O60494</id>
        <label>CUBN</label>
    </interactant>
    <organismsDiffer>false</organismsDiffer>
    <experiments>3</experiments>
</comment>
<comment type="subcellular location">
    <molecule>Isoform 1</molecule>
    <subcellularLocation>
        <location evidence="4">Apical cell membrane</location>
        <topology evidence="15">Single-pass type I membrane protein</topology>
    </subcellularLocation>
    <subcellularLocation>
        <location evidence="4 8 9">Cell membrane</location>
        <topology evidence="10">Single-pass type I membrane protein</topology>
    </subcellularLocation>
    <subcellularLocation>
        <location evidence="12">Endosome membrane</location>
    </subcellularLocation>
    <subcellularLocation>
        <location evidence="12">Membrane</location>
        <location evidence="12">Coated pit</location>
    </subcellularLocation>
</comment>
<comment type="subcellular location">
    <molecule>Soluble protein amnionless</molecule>
    <subcellularLocation>
        <location evidence="4">Secreted</location>
    </subcellularLocation>
</comment>
<comment type="alternative products">
    <event type="alternative promoter"/>
    <isoform>
        <id>Q9BXJ7-1</id>
        <name>1</name>
        <sequence type="displayed"/>
    </isoform>
    <text evidence="11">At least 5 isoforms, 1, 2, 3, 4 and 5, are produced.</text>
</comment>
<comment type="tissue specificity">
    <text evidence="3 4 8">Detected in proximal tubules in the kidney cortex (at protein level) (PubMed:14576052, PubMed:29402915). Long isoforms are highly expressed in small intestine, colon and kidney (renal proximal tubule epithelial cells). Shorter isoforms are detected at lower levels in testis, thymus and peripheral blood leukocytes.</text>
</comment>
<comment type="domain">
    <text evidence="1">The complex formed by AMN and CUBN is composed of a 400 Angstrom long stem and a globular crown region. The stem region is probably formed by AMN and the CUBN N-terminal region, including the EGF-like domains. The crown is probably formed by the CUBN CUB domains.</text>
</comment>
<comment type="PTM">
    <text evidence="4">N-glycosylated.</text>
</comment>
<comment type="PTM">
    <text evidence="4">A soluble form arises by proteolytic removal of the membrane anchor.</text>
</comment>
<comment type="disease" evidence="3 5 6 7 8 9">
    <disease id="DI-05840">
        <name>Imerslund-Grasbeck syndrome 2</name>
        <acronym>IGS2</acronym>
        <description>A form of Imerslund-Grasbeck syndrome, a rare autosomal recessive disorder characterized by vitamin B12 deficiency commonly resulting in megaloblastic anemia, which is responsive to parenteral vitamin B12 therapy and appears in infancy or early childhood. Clinical manifestations include failure to thrive, infections and neurological damage. Mild proteinuria, with no signs of kidney disease, is present in about half of the patients.</description>
        <dbReference type="MIM" id="618882"/>
    </disease>
    <text>The disease is caused by variants affecting the gene represented in this entry.</text>
</comment>
<comment type="miscellaneous">
    <text evidence="10">The role of Amn in embryonic development seems to be species specific. In mice, null mutations lead to embryonic lethality. Human mutations give rise to much milder symptoms.</text>
</comment>
<proteinExistence type="evidence at protein level"/>
<feature type="signal peptide" evidence="4">
    <location>
        <begin position="1"/>
        <end position="19"/>
    </location>
</feature>
<feature type="chain" id="PRO_0000020702" description="Protein amnionless">
    <location>
        <begin position="20"/>
        <end position="453"/>
    </location>
</feature>
<feature type="chain" id="PRO_0000447651" description="Soluble protein amnionless">
    <location>
        <begin position="20"/>
        <end status="unknown"/>
    </location>
</feature>
<feature type="topological domain" description="Extracellular" evidence="15">
    <location>
        <begin position="20"/>
        <end position="357"/>
    </location>
</feature>
<feature type="transmembrane region" description="Helical" evidence="2">
    <location>
        <begin position="358"/>
        <end position="378"/>
    </location>
</feature>
<feature type="topological domain" description="Cytoplasmic" evidence="2">
    <location>
        <begin position="379"/>
        <end position="453"/>
    </location>
</feature>
<feature type="domain" description="VWFC">
    <location>
        <begin position="202"/>
        <end position="254"/>
    </location>
</feature>
<feature type="region of interest" description="Interaction with CUBN" evidence="9">
    <location>
        <begin position="67"/>
        <end position="87"/>
    </location>
</feature>
<feature type="glycosylation site" description="N-linked (GlcNAc...) asparagine" evidence="2">
    <location>
        <position position="35"/>
    </location>
</feature>
<feature type="disulfide bond" evidence="9 16">
    <location>
        <begin position="43"/>
        <end position="96"/>
    </location>
</feature>
<feature type="disulfide bond" evidence="9 16">
    <location>
        <begin position="137"/>
        <end position="213"/>
    </location>
</feature>
<feature type="disulfide bond" evidence="9 16">
    <location>
        <begin position="205"/>
        <end position="211"/>
    </location>
</feature>
<feature type="disulfide bond" evidence="9 16">
    <location>
        <begin position="223"/>
        <end position="249"/>
    </location>
</feature>
<feature type="disulfide bond" evidence="9 16">
    <location>
        <begin position="234"/>
        <end position="250"/>
    </location>
</feature>
<feature type="disulfide bond" evidence="9 16">
    <location>
        <begin position="239"/>
        <end position="253"/>
    </location>
</feature>
<feature type="sequence variant" id="VAR_015733" description="In IGS2; reduced presence at the cell membrane; loss of interaction with CUBN; reduced CUBN expression at the cell surface; dbSNP:rs119478058." evidence="3 6 8 9">
    <original>T</original>
    <variation>I</variation>
    <location>
        <position position="41"/>
    </location>
</feature>
<feature type="sequence variant" id="VAR_081906" description="In IGS2; loss of interaction with CUBN; strongly reduced CUBN expression at the cell surface; dbSNP:rs375774640." evidence="7">
    <original>M</original>
    <variation>K</variation>
    <location>
        <position position="69"/>
    </location>
</feature>
<feature type="sequence variant" id="VAR_081907" description="In IGS2; loss of interaction with CUBN; strongly reduced CUBN expression at the cell surface; dbSNP:rs386834176." evidence="6 8">
    <original>C</original>
    <variation>F</variation>
    <location>
        <position position="234"/>
    </location>
</feature>
<feature type="mutagenesis site" description="Loss of expression at the cell membrane." evidence="9">
    <original>N</original>
    <variation>Q</variation>
    <location>
        <position position="35"/>
    </location>
</feature>
<feature type="mutagenesis site" description="No effect." evidence="9">
    <original>S</original>
    <variation>A</variation>
    <location>
        <position position="37"/>
    </location>
</feature>
<feature type="mutagenesis site" description="Loss of interaction with CUBN and strongly reduced CUBN expression at the cell surface." evidence="8">
    <original>L</original>
    <variation>P</variation>
    <location>
        <position position="59"/>
    </location>
</feature>
<feature type="mutagenesis site" description="Loss of interaction with CUBN and strongly reduced CUBN expression at the cell surface." evidence="8">
    <original>G</original>
    <variation>E</variation>
    <location>
        <position position="254"/>
    </location>
</feature>
<feature type="sequence conflict" description="In Ref. 1; AAK28532." evidence="10" ref="1">
    <original>S</original>
    <variation>F</variation>
    <location>
        <position position="241"/>
    </location>
</feature>
<feature type="strand" evidence="17">
    <location>
        <begin position="21"/>
        <end position="24"/>
    </location>
</feature>
<feature type="helix" evidence="17">
    <location>
        <begin position="33"/>
        <end position="35"/>
    </location>
</feature>
<feature type="helix" evidence="17">
    <location>
        <begin position="37"/>
        <end position="39"/>
    </location>
</feature>
<feature type="strand" evidence="17">
    <location>
        <begin position="46"/>
        <end position="49"/>
    </location>
</feature>
<feature type="strand" evidence="17">
    <location>
        <begin position="56"/>
        <end position="60"/>
    </location>
</feature>
<feature type="strand" evidence="17">
    <location>
        <begin position="62"/>
        <end position="70"/>
    </location>
</feature>
<feature type="strand" evidence="17">
    <location>
        <begin position="73"/>
        <end position="79"/>
    </location>
</feature>
<feature type="strand" evidence="17">
    <location>
        <begin position="84"/>
        <end position="87"/>
    </location>
</feature>
<feature type="turn" evidence="17">
    <location>
        <begin position="91"/>
        <end position="98"/>
    </location>
</feature>
<feature type="strand" evidence="17">
    <location>
        <begin position="102"/>
        <end position="104"/>
    </location>
</feature>
<feature type="helix" evidence="17">
    <location>
        <begin position="115"/>
        <end position="117"/>
    </location>
</feature>
<feature type="strand" evidence="17">
    <location>
        <begin position="118"/>
        <end position="120"/>
    </location>
</feature>
<feature type="helix" evidence="17">
    <location>
        <begin position="131"/>
        <end position="133"/>
    </location>
</feature>
<feature type="strand" evidence="17">
    <location>
        <begin position="141"/>
        <end position="143"/>
    </location>
</feature>
<feature type="strand" evidence="17">
    <location>
        <begin position="161"/>
        <end position="168"/>
    </location>
</feature>
<feature type="strand" evidence="17">
    <location>
        <begin position="171"/>
        <end position="173"/>
    </location>
</feature>
<feature type="helix" evidence="17">
    <location>
        <begin position="176"/>
        <end position="184"/>
    </location>
</feature>
<feature type="helix" evidence="17">
    <location>
        <begin position="186"/>
        <end position="189"/>
    </location>
</feature>
<feature type="strand" evidence="17">
    <location>
        <begin position="192"/>
        <end position="195"/>
    </location>
</feature>
<feature type="strand" evidence="17">
    <location>
        <begin position="198"/>
        <end position="200"/>
    </location>
</feature>
<feature type="helix" evidence="17">
    <location>
        <begin position="219"/>
        <end position="226"/>
    </location>
</feature>
<feature type="helix" evidence="17">
    <location>
        <begin position="228"/>
        <end position="230"/>
    </location>
</feature>
<feature type="strand" evidence="17">
    <location>
        <begin position="238"/>
        <end position="241"/>
    </location>
</feature>
<feature type="strand" evidence="17">
    <location>
        <begin position="252"/>
        <end position="261"/>
    </location>
</feature>
<feature type="helix" evidence="17">
    <location>
        <begin position="267"/>
        <end position="276"/>
    </location>
</feature>
<feature type="turn" evidence="17">
    <location>
        <begin position="277"/>
        <end position="280"/>
    </location>
</feature>
<feature type="helix" evidence="17">
    <location>
        <begin position="282"/>
        <end position="284"/>
    </location>
</feature>
<feature type="strand" evidence="17">
    <location>
        <begin position="287"/>
        <end position="296"/>
    </location>
</feature>
<feature type="turn" evidence="17">
    <location>
        <begin position="300"/>
        <end position="302"/>
    </location>
</feature>
<feature type="strand" evidence="17">
    <location>
        <begin position="305"/>
        <end position="313"/>
    </location>
</feature>
<feature type="helix" evidence="17">
    <location>
        <begin position="320"/>
        <end position="339"/>
    </location>
</feature>
<feature type="strand" evidence="17">
    <location>
        <begin position="341"/>
        <end position="348"/>
    </location>
</feature>
<evidence type="ECO:0000250" key="1">
    <source>
        <dbReference type="UniProtKB" id="F1SAM7"/>
    </source>
</evidence>
<evidence type="ECO:0000255" key="2"/>
<evidence type="ECO:0000269" key="3">
    <source>
    </source>
</evidence>
<evidence type="ECO:0000269" key="4">
    <source>
    </source>
</evidence>
<evidence type="ECO:0000269" key="5">
    <source>
    </source>
</evidence>
<evidence type="ECO:0000269" key="6">
    <source>
    </source>
</evidence>
<evidence type="ECO:0000269" key="7">
    <source>
    </source>
</evidence>
<evidence type="ECO:0000269" key="8">
    <source>
    </source>
</evidence>
<evidence type="ECO:0000269" key="9">
    <source>
    </source>
</evidence>
<evidence type="ECO:0000305" key="10"/>
<evidence type="ECO:0000305" key="11">
    <source>
    </source>
</evidence>
<evidence type="ECO:0000305" key="12">
    <source>
    </source>
</evidence>
<evidence type="ECO:0000305" key="13">
    <source>
    </source>
</evidence>
<evidence type="ECO:0000305" key="14">
    <source>
    </source>
</evidence>
<evidence type="ECO:0000305" key="15">
    <source>
    </source>
</evidence>
<evidence type="ECO:0007744" key="16">
    <source>
        <dbReference type="PDB" id="6GJE"/>
    </source>
</evidence>
<evidence type="ECO:0007829" key="17">
    <source>
        <dbReference type="PDB" id="6GJE"/>
    </source>
</evidence>
<gene>
    <name type="primary">AMN</name>
    <name type="ORF">UNQ513/PRO1028</name>
</gene>
<reference key="1">
    <citation type="journal article" date="2001" name="Nat. Genet.">
        <title>The amnionless gene, essential for mouse gastrulation, encodes a visceral-endoderm-specific protein with an extracellular cysteine-rich domain.</title>
        <authorList>
            <person name="Kalantry S."/>
            <person name="Manning S."/>
            <person name="Haub O."/>
            <person name="Tomihara-Newberger C."/>
            <person name="Lee H.-G."/>
            <person name="Fangman J."/>
            <person name="Disteche C.M."/>
            <person name="Manova K."/>
            <person name="Lacy E."/>
        </authorList>
    </citation>
    <scope>NUCLEOTIDE SEQUENCE [MRNA]</scope>
</reference>
<reference key="2">
    <citation type="journal article" date="2003" name="Nature">
        <title>The DNA sequence and analysis of human chromosome 14.</title>
        <authorList>
            <person name="Heilig R."/>
            <person name="Eckenberg R."/>
            <person name="Petit J.-L."/>
            <person name="Fonknechten N."/>
            <person name="Da Silva C."/>
            <person name="Cattolico L."/>
            <person name="Levy M."/>
            <person name="Barbe V."/>
            <person name="De Berardinis V."/>
            <person name="Ureta-Vidal A."/>
            <person name="Pelletier E."/>
            <person name="Vico V."/>
            <person name="Anthouard V."/>
            <person name="Rowen L."/>
            <person name="Madan A."/>
            <person name="Qin S."/>
            <person name="Sun H."/>
            <person name="Du H."/>
            <person name="Pepin K."/>
            <person name="Artiguenave F."/>
            <person name="Robert C."/>
            <person name="Cruaud C."/>
            <person name="Bruels T."/>
            <person name="Jaillon O."/>
            <person name="Friedlander L."/>
            <person name="Samson G."/>
            <person name="Brottier P."/>
            <person name="Cure S."/>
            <person name="Segurens B."/>
            <person name="Aniere F."/>
            <person name="Samain S."/>
            <person name="Crespeau H."/>
            <person name="Abbasi N."/>
            <person name="Aiach N."/>
            <person name="Boscus D."/>
            <person name="Dickhoff R."/>
            <person name="Dors M."/>
            <person name="Dubois I."/>
            <person name="Friedman C."/>
            <person name="Gouyvenoux M."/>
            <person name="James R."/>
            <person name="Madan A."/>
            <person name="Mairey-Estrada B."/>
            <person name="Mangenot S."/>
            <person name="Martins N."/>
            <person name="Menard M."/>
            <person name="Oztas S."/>
            <person name="Ratcliffe A."/>
            <person name="Shaffer T."/>
            <person name="Trask B."/>
            <person name="Vacherie B."/>
            <person name="Bellemere C."/>
            <person name="Belser C."/>
            <person name="Besnard-Gonnet M."/>
            <person name="Bartol-Mavel D."/>
            <person name="Boutard M."/>
            <person name="Briez-Silla S."/>
            <person name="Combette S."/>
            <person name="Dufosse-Laurent V."/>
            <person name="Ferron C."/>
            <person name="Lechaplais C."/>
            <person name="Louesse C."/>
            <person name="Muselet D."/>
            <person name="Magdelenat G."/>
            <person name="Pateau E."/>
            <person name="Petit E."/>
            <person name="Sirvain-Trukniewicz P."/>
            <person name="Trybou A."/>
            <person name="Vega-Czarny N."/>
            <person name="Bataille E."/>
            <person name="Bluet E."/>
            <person name="Bordelais I."/>
            <person name="Dubois M."/>
            <person name="Dumont C."/>
            <person name="Guerin T."/>
            <person name="Haffray S."/>
            <person name="Hammadi R."/>
            <person name="Muanga J."/>
            <person name="Pellouin V."/>
            <person name="Robert D."/>
            <person name="Wunderle E."/>
            <person name="Gauguet G."/>
            <person name="Roy A."/>
            <person name="Sainte-Marthe L."/>
            <person name="Verdier J."/>
            <person name="Verdier-Discala C."/>
            <person name="Hillier L.W."/>
            <person name="Fulton L."/>
            <person name="McPherson J."/>
            <person name="Matsuda F."/>
            <person name="Wilson R."/>
            <person name="Scarpelli C."/>
            <person name="Gyapay G."/>
            <person name="Wincker P."/>
            <person name="Saurin W."/>
            <person name="Quetier F."/>
            <person name="Waterston R."/>
            <person name="Hood L."/>
            <person name="Weissenbach J."/>
        </authorList>
    </citation>
    <scope>NUCLEOTIDE SEQUENCE [LARGE SCALE GENOMIC DNA]</scope>
</reference>
<reference key="3">
    <citation type="journal article" date="2003" name="Genome Res.">
        <title>The secreted protein discovery initiative (SPDI), a large-scale effort to identify novel human secreted and transmembrane proteins: a bioinformatics assessment.</title>
        <authorList>
            <person name="Clark H.F."/>
            <person name="Gurney A.L."/>
            <person name="Abaya E."/>
            <person name="Baker K."/>
            <person name="Baldwin D.T."/>
            <person name="Brush J."/>
            <person name="Chen J."/>
            <person name="Chow B."/>
            <person name="Chui C."/>
            <person name="Crowley C."/>
            <person name="Currell B."/>
            <person name="Deuel B."/>
            <person name="Dowd P."/>
            <person name="Eaton D."/>
            <person name="Foster J.S."/>
            <person name="Grimaldi C."/>
            <person name="Gu Q."/>
            <person name="Hass P.E."/>
            <person name="Heldens S."/>
            <person name="Huang A."/>
            <person name="Kim H.S."/>
            <person name="Klimowski L."/>
            <person name="Jin Y."/>
            <person name="Johnson S."/>
            <person name="Lee J."/>
            <person name="Lewis L."/>
            <person name="Liao D."/>
            <person name="Mark M.R."/>
            <person name="Robbie E."/>
            <person name="Sanchez C."/>
            <person name="Schoenfeld J."/>
            <person name="Seshagiri S."/>
            <person name="Simmons L."/>
            <person name="Singh J."/>
            <person name="Smith V."/>
            <person name="Stinson J."/>
            <person name="Vagts A."/>
            <person name="Vandlen R.L."/>
            <person name="Watanabe C."/>
            <person name="Wieand D."/>
            <person name="Woods K."/>
            <person name="Xie M.-H."/>
            <person name="Yansura D.G."/>
            <person name="Yi S."/>
            <person name="Yu G."/>
            <person name="Yuan J."/>
            <person name="Zhang M."/>
            <person name="Zhang Z."/>
            <person name="Goddard A.D."/>
            <person name="Wood W.I."/>
            <person name="Godowski P.J."/>
            <person name="Gray A.M."/>
        </authorList>
    </citation>
    <scope>NUCLEOTIDE SEQUENCE [LARGE SCALE MRNA] OF 1-230</scope>
</reference>
<reference key="4">
    <citation type="journal article" date="2003" name="Nat. Genet.">
        <title>Amnionless, essential for mouse gastrulation, is mutated in recessive hereditary megaloblastic anemia.</title>
        <authorList>
            <person name="Tanner S.M."/>
            <person name="Aminoff M."/>
            <person name="Wright F.A."/>
            <person name="Liyanarachchi S."/>
            <person name="Kuronen M."/>
            <person name="Saarinen A."/>
            <person name="Massika O."/>
            <person name="Mandel H."/>
            <person name="Broch H."/>
            <person name="de la Chapelle A."/>
        </authorList>
    </citation>
    <scope>PROTEIN SEQUENCE OF 300-323 AND 393-453</scope>
    <scope>TISSUE SPECIFICITY</scope>
    <scope>VARIANT IGS2 ILE-41</scope>
    <scope>FUNCTION</scope>
    <scope>ALTERNATIVE PRODUCTS</scope>
</reference>
<reference key="5">
    <citation type="journal article" date="2004" name="Blood">
        <title>The functional cobalamin (vitamin B12)-intrinsic factor receptor is a novel complex of cubilin and amnionless.</title>
        <authorList>
            <person name="Fyfe J.C."/>
            <person name="Madsen M."/>
            <person name="Hoejrup P."/>
            <person name="Christensen E.I."/>
            <person name="Tanner S.M."/>
            <person name="de la Chapelle A."/>
            <person name="He Q."/>
            <person name="Moestrup S.K."/>
        </authorList>
    </citation>
    <scope>IDENTIFICATION BY MASS SPECTROMETRY</scope>
    <scope>FUNCTION</scope>
    <scope>INTERACTION WITH CUBN</scope>
    <scope>TISSUE SPECIFICITY</scope>
    <scope>SUBCELLULAR LOCATION</scope>
    <scope>GLYCOSYLATION</scope>
</reference>
<reference evidence="16" key="6">
    <citation type="journal article" date="2018" name="Nat. Commun.">
        <title>Structural assembly of the megadalton-sized receptor for intestinal vitamin B12 uptake and kidney protein reabsorption.</title>
        <authorList>
            <person name="Larsen C."/>
            <person name="Etzerodt A."/>
            <person name="Madsen M."/>
            <person name="Skjodt K."/>
            <person name="Moestrup S.K."/>
            <person name="Andersen C.B.F."/>
        </authorList>
    </citation>
    <scope>X-RAY CRYSTALLOGRAPHY (2.30 ANGSTROMS) OF 20-357 IN COMPLEX WITH CUBN</scope>
    <scope>CHARACTERIZATION OF VARIANT IGS2 ILE-41</scope>
    <scope>SUBUNIT</scope>
    <scope>SUBCELLULAR LOCATION</scope>
    <scope>TOPOLOGY</scope>
    <scope>DISULFIDE BONDS</scope>
    <scope>MUTAGENESIS OF ASN-35 AND SER-37</scope>
</reference>
<reference key="7">
    <citation type="journal article" date="2012" name="Orphanet J. Rare Dis.">
        <title>Inherited cobalamin malabsorption. Mutations in three genes reveal functional and ethnic patterns.</title>
        <authorList>
            <person name="Tanner S.M."/>
            <person name="Sturm A.C."/>
            <person name="Baack E.C."/>
            <person name="Liyanarachchi S."/>
            <person name="de la Chapelle A."/>
        </authorList>
    </citation>
    <scope>VARIANTS IGS2 ILE-41 AND PHE-234</scope>
</reference>
<reference key="8">
    <citation type="journal article" date="2015" name="BMC Med. Genet.">
        <title>Novel compound heterozygous mutations in AMN cause Imerslund-Graesbeck syndrome in two half-sisters: a case report.</title>
        <authorList>
            <person name="Montgomery E."/>
            <person name="Sayer J.A."/>
            <person name="Baines L.A."/>
            <person name="Hynes A.M."/>
            <person name="Vega-Warner V."/>
            <person name="Johnson S."/>
            <person name="Goodship J.A."/>
            <person name="Otto E.A."/>
        </authorList>
    </citation>
    <scope>VARIANT IGS2 LYS-69</scope>
    <scope>FUNCTION</scope>
</reference>
<reference key="9">
    <citation type="journal article" date="2012" name="Pediatr. Int.">
        <title>Imerslund-Grasbeck syndrome: new mutation in amnionless.</title>
        <authorList>
            <person name="Densupsoontorn N."/>
            <person name="Sanpakit K."/>
            <person name="Vijarnsorn C."/>
            <person name="Pattaragarn A."/>
            <person name="Kangwanpornsiri C."/>
            <person name="Jatutipsompol C."/>
            <person name="Tirapongporn H."/>
            <person name="Jirapinyo P."/>
            <person name="Shah N.P."/>
            <person name="Sturm A.C."/>
            <person name="Tanner S.M."/>
        </authorList>
    </citation>
    <scope>INVOLVEMENT IN IGS2</scope>
</reference>
<reference key="10">
    <citation type="journal article" date="2018" name="Sci. Rep.">
        <title>Amnionless-mediated glycosylation is crucial for cell surface targeting of cubilin in renal and intestinal cells.</title>
        <authorList>
            <person name="Udagawa T."/>
            <person name="Harita Y."/>
            <person name="Miura K."/>
            <person name="Mitsui J."/>
            <person name="Ode K.L."/>
            <person name="Morishita S."/>
            <person name="Urae S."/>
            <person name="Kanda S."/>
            <person name="Kajiho Y."/>
            <person name="Tsurumi H."/>
            <person name="Ueda H.R."/>
            <person name="Tsuji S."/>
            <person name="Saito A."/>
            <person name="Oka A."/>
        </authorList>
    </citation>
    <scope>FUNCTION</scope>
    <scope>INTERACTION WITH CUBN</scope>
    <scope>SUBCELLULAR LOCATION</scope>
    <scope>TISSUE SPECIFICITY</scope>
    <scope>CHARACTERIZATION OF VARIANTS IGS2 ILE-41; LYS-69 AND PHE-234</scope>
    <scope>MUTAGENESIS OF LEU-59 AND GLY-254</scope>
</reference>
<accession>Q9BXJ7</accession>
<accession>Q6UX83</accession>
<sequence>MGVLGRVLLWLQLCALTQAVSKLWVPNTDFDVAANWSQNRTPCAGGAVEFPADKMVSVLVQEGHAVSDMLLPLDGELVLASGAGFGVSDVGSHLDCGAGEPAVFRDSDRFSWHDPHLWRSGDEAPGLFFVDAERVPCRHDDVFFPPSASFRVGLGPGASPVRVRSISALGRTFTRDEDLAVFLASRAGRLRFHGPGALSVGPEDCADPSGCVCGNAEAQPWICAALLQPLGGRCPQAACHSALRPQGQCCDLCGAVVLLTHGPAFDLERYRARILDTFLGLPQYHGLQVAVSKVPRSSRLREADTEIQVVLVENGPETGGAGRLARALLADVAENGEALGVLEATMRESGAHVWGSSAAGLAGGVAAAVLLALLVLLVAPPLLRRAGRLRWRRHEAAAPAGAPLGFRNPVFDVTASEELPLPRRLSLVPKAAADSTSHSYFVNPLFAGAEAEA</sequence>
<name>AMNLS_HUMAN</name>